<organism>
    <name type="scientific">Anaeromyxobacter dehalogenans (strain 2CP-C)</name>
    <dbReference type="NCBI Taxonomy" id="290397"/>
    <lineage>
        <taxon>Bacteria</taxon>
        <taxon>Pseudomonadati</taxon>
        <taxon>Myxococcota</taxon>
        <taxon>Myxococcia</taxon>
        <taxon>Myxococcales</taxon>
        <taxon>Cystobacterineae</taxon>
        <taxon>Anaeromyxobacteraceae</taxon>
        <taxon>Anaeromyxobacter</taxon>
    </lineage>
</organism>
<evidence type="ECO:0000255" key="1">
    <source>
        <dbReference type="HAMAP-Rule" id="MF_00120"/>
    </source>
</evidence>
<accession>Q2IH94</accession>
<comment type="function">
    <text evidence="1">Allows the formation of correctly charged Gln-tRNA(Gln) through the transamidation of misacylated Glu-tRNA(Gln) in organisms which lack glutaminyl-tRNA synthetase. The reaction takes place in the presence of glutamine and ATP through an activated gamma-phospho-Glu-tRNA(Gln).</text>
</comment>
<comment type="catalytic activity">
    <reaction evidence="1">
        <text>L-glutamyl-tRNA(Gln) + L-glutamine + ATP + H2O = L-glutaminyl-tRNA(Gln) + L-glutamate + ADP + phosphate + H(+)</text>
        <dbReference type="Rhea" id="RHEA:17521"/>
        <dbReference type="Rhea" id="RHEA-COMP:9681"/>
        <dbReference type="Rhea" id="RHEA-COMP:9684"/>
        <dbReference type="ChEBI" id="CHEBI:15377"/>
        <dbReference type="ChEBI" id="CHEBI:15378"/>
        <dbReference type="ChEBI" id="CHEBI:29985"/>
        <dbReference type="ChEBI" id="CHEBI:30616"/>
        <dbReference type="ChEBI" id="CHEBI:43474"/>
        <dbReference type="ChEBI" id="CHEBI:58359"/>
        <dbReference type="ChEBI" id="CHEBI:78520"/>
        <dbReference type="ChEBI" id="CHEBI:78521"/>
        <dbReference type="ChEBI" id="CHEBI:456216"/>
        <dbReference type="EC" id="6.3.5.7"/>
    </reaction>
</comment>
<comment type="subunit">
    <text evidence="1">Heterotrimer of A, B and C subunits.</text>
</comment>
<comment type="similarity">
    <text evidence="1">Belongs to the amidase family. GatA subfamily.</text>
</comment>
<reference key="1">
    <citation type="submission" date="2006-01" db="EMBL/GenBank/DDBJ databases">
        <title>Complete sequence of Anaeromyxobacter dehalogenans 2CP-C.</title>
        <authorList>
            <person name="Copeland A."/>
            <person name="Lucas S."/>
            <person name="Lapidus A."/>
            <person name="Barry K."/>
            <person name="Detter J.C."/>
            <person name="Glavina T."/>
            <person name="Hammon N."/>
            <person name="Israni S."/>
            <person name="Pitluck S."/>
            <person name="Brettin T."/>
            <person name="Bruce D."/>
            <person name="Han C."/>
            <person name="Tapia R."/>
            <person name="Gilna P."/>
            <person name="Kiss H."/>
            <person name="Schmutz J."/>
            <person name="Larimer F."/>
            <person name="Land M."/>
            <person name="Kyrpides N."/>
            <person name="Anderson I."/>
            <person name="Sanford R.A."/>
            <person name="Ritalahti K.M."/>
            <person name="Thomas H.S."/>
            <person name="Kirby J.R."/>
            <person name="Zhulin I.B."/>
            <person name="Loeffler F.E."/>
            <person name="Richardson P."/>
        </authorList>
    </citation>
    <scope>NUCLEOTIDE SEQUENCE [LARGE SCALE GENOMIC DNA]</scope>
    <source>
        <strain>2CP-C</strain>
    </source>
</reference>
<proteinExistence type="inferred from homology"/>
<protein>
    <recommendedName>
        <fullName evidence="1">Glutamyl-tRNA(Gln) amidotransferase subunit A</fullName>
        <shortName evidence="1">Glu-ADT subunit A</shortName>
        <ecNumber evidence="1">6.3.5.7</ecNumber>
    </recommendedName>
</protein>
<gene>
    <name evidence="1" type="primary">gatA</name>
    <name type="ordered locus">Adeh_4188</name>
</gene>
<keyword id="KW-0067">ATP-binding</keyword>
<keyword id="KW-0436">Ligase</keyword>
<keyword id="KW-0547">Nucleotide-binding</keyword>
<keyword id="KW-0648">Protein biosynthesis</keyword>
<keyword id="KW-1185">Reference proteome</keyword>
<name>GATA_ANADE</name>
<feature type="chain" id="PRO_0000241063" description="Glutamyl-tRNA(Gln) amidotransferase subunit A">
    <location>
        <begin position="1"/>
        <end position="492"/>
    </location>
</feature>
<feature type="active site" description="Charge relay system" evidence="1">
    <location>
        <position position="84"/>
    </location>
</feature>
<feature type="active site" description="Charge relay system" evidence="1">
    <location>
        <position position="159"/>
    </location>
</feature>
<feature type="active site" description="Acyl-ester intermediate" evidence="1">
    <location>
        <position position="183"/>
    </location>
</feature>
<sequence length="492" mass="51519">MSTPAKELCRLGLREAGAGVAAKAISSTELVEASLARIQATDGKLGAFLAVCADRARAAAKAADARAARGERRSELDGVPVAVKDLFVTKGVPTTAGSRILEGYLPPYDATVVERLEAAGAVIVGKLNMDEFAMGSSNENSAYKPCHNPWDLSRTPGGSSGGSAASVAAGQVHASLGTDTGGSIREPAAFCGVVGVKPTYGRVSRYGVVAFASSLDQVGPLAREVGDAALVLRTIAGHDPRDMTSSTRPVDDYLGPLEEGARGLRVGVPREWLSGGLDAGVEAAIRAALDTYRRLGATLVDVSLPHSKYGIGAYYLIAPAEASSNLARYDGVRYGLRAEGAKGLKEMYAESREQGLGAEPKRRIMLGTYALSSGYYDAYYLRAQKVRTLIRRDFDEAFRGCDVIAGPVTPSVAFALGERTGDPLQMYLADIFTITCNLAALPGLSVPCGLEAASGLPVGLQLVGRPFDEATLFRAARALERELGPLPAPPEP</sequence>
<dbReference type="EC" id="6.3.5.7" evidence="1"/>
<dbReference type="EMBL" id="CP000251">
    <property type="protein sequence ID" value="ABC83952.1"/>
    <property type="molecule type" value="Genomic_DNA"/>
</dbReference>
<dbReference type="RefSeq" id="WP_011423234.1">
    <property type="nucleotide sequence ID" value="NC_007760.1"/>
</dbReference>
<dbReference type="SMR" id="Q2IH94"/>
<dbReference type="STRING" id="290397.Adeh_4188"/>
<dbReference type="KEGG" id="ade:Adeh_4188"/>
<dbReference type="eggNOG" id="COG0154">
    <property type="taxonomic scope" value="Bacteria"/>
</dbReference>
<dbReference type="HOGENOM" id="CLU_009600_0_3_7"/>
<dbReference type="OrthoDB" id="9811471at2"/>
<dbReference type="Proteomes" id="UP000001935">
    <property type="component" value="Chromosome"/>
</dbReference>
<dbReference type="GO" id="GO:0030956">
    <property type="term" value="C:glutamyl-tRNA(Gln) amidotransferase complex"/>
    <property type="evidence" value="ECO:0007669"/>
    <property type="project" value="InterPro"/>
</dbReference>
<dbReference type="GO" id="GO:0005524">
    <property type="term" value="F:ATP binding"/>
    <property type="evidence" value="ECO:0007669"/>
    <property type="project" value="UniProtKB-KW"/>
</dbReference>
<dbReference type="GO" id="GO:0050567">
    <property type="term" value="F:glutaminyl-tRNA synthase (glutamine-hydrolyzing) activity"/>
    <property type="evidence" value="ECO:0007669"/>
    <property type="project" value="UniProtKB-UniRule"/>
</dbReference>
<dbReference type="GO" id="GO:0006412">
    <property type="term" value="P:translation"/>
    <property type="evidence" value="ECO:0007669"/>
    <property type="project" value="UniProtKB-UniRule"/>
</dbReference>
<dbReference type="Gene3D" id="3.90.1300.10">
    <property type="entry name" value="Amidase signature (AS) domain"/>
    <property type="match status" value="1"/>
</dbReference>
<dbReference type="HAMAP" id="MF_00120">
    <property type="entry name" value="GatA"/>
    <property type="match status" value="1"/>
</dbReference>
<dbReference type="InterPro" id="IPR000120">
    <property type="entry name" value="Amidase"/>
</dbReference>
<dbReference type="InterPro" id="IPR020556">
    <property type="entry name" value="Amidase_CS"/>
</dbReference>
<dbReference type="InterPro" id="IPR023631">
    <property type="entry name" value="Amidase_dom"/>
</dbReference>
<dbReference type="InterPro" id="IPR036928">
    <property type="entry name" value="AS_sf"/>
</dbReference>
<dbReference type="InterPro" id="IPR004412">
    <property type="entry name" value="GatA"/>
</dbReference>
<dbReference type="NCBIfam" id="TIGR00132">
    <property type="entry name" value="gatA"/>
    <property type="match status" value="1"/>
</dbReference>
<dbReference type="PANTHER" id="PTHR11895:SF151">
    <property type="entry name" value="GLUTAMYL-TRNA(GLN) AMIDOTRANSFERASE SUBUNIT A"/>
    <property type="match status" value="1"/>
</dbReference>
<dbReference type="PANTHER" id="PTHR11895">
    <property type="entry name" value="TRANSAMIDASE"/>
    <property type="match status" value="1"/>
</dbReference>
<dbReference type="Pfam" id="PF01425">
    <property type="entry name" value="Amidase"/>
    <property type="match status" value="1"/>
</dbReference>
<dbReference type="SUPFAM" id="SSF75304">
    <property type="entry name" value="Amidase signature (AS) enzymes"/>
    <property type="match status" value="1"/>
</dbReference>
<dbReference type="PROSITE" id="PS00571">
    <property type="entry name" value="AMIDASES"/>
    <property type="match status" value="1"/>
</dbReference>